<organism>
    <name type="scientific">Pongo abelii</name>
    <name type="common">Sumatran orangutan</name>
    <name type="synonym">Pongo pygmaeus abelii</name>
    <dbReference type="NCBI Taxonomy" id="9601"/>
    <lineage>
        <taxon>Eukaryota</taxon>
        <taxon>Metazoa</taxon>
        <taxon>Chordata</taxon>
        <taxon>Craniata</taxon>
        <taxon>Vertebrata</taxon>
        <taxon>Euteleostomi</taxon>
        <taxon>Mammalia</taxon>
        <taxon>Eutheria</taxon>
        <taxon>Euarchontoglires</taxon>
        <taxon>Primates</taxon>
        <taxon>Haplorrhini</taxon>
        <taxon>Catarrhini</taxon>
        <taxon>Hominidae</taxon>
        <taxon>Pongo</taxon>
    </lineage>
</organism>
<proteinExistence type="evidence at transcript level"/>
<sequence length="571" mass="63873">MERPEEGKQSPPPQPWGRLLRLGAEEGEPYVLLRKREWTIGRRRGCDLSFPSNKLVSGDHCRIAVDEKSGQVTLEDTSTSGTVINKLKVVKKQTCPLQTGDVIYLVYRKNEPEHRSGGGGISPKGSGPSVASDEVSSFATALPDRKTASFSSLEPQDQEDLEPMKKKMRGDGDLDLNGQLLVAQPRRNAQTVHEDVRAAAGKPDKMEETLTCIICQDLLHDCVSLQPCMHTFCAACYSGWMERSSLCPTCRCPVERICKNHILNNLVEAYLIQHPDKSRSEEDVQSMDARNKITQDMLQPKVRRSFSDEEGSSEDLLELSDVDSESSDISQPYVVCRQCPEYRRQAAQPPPCPAPEGEPGVPQALVDAPSTSVSLTTVQDYVCPLQGSHALCTCCFQPMPDRRAEREQNPRVAPQQCAVCLQPFCHLYWGCTRTGCFGCLAPFCELNLGDKCLDGVLNNNSYESDILKNYLATRGLTWKNMLTESLVALQRGVFLLSDYRVTGDTILCYCCGLRSFRELTYQYRQNIPASELPVAVTSRPDCYWGRNCRTQVKAHHAMKFNHICEQTRFKN</sequence>
<dbReference type="EC" id="2.3.2.27" evidence="2"/>
<dbReference type="EMBL" id="CR857284">
    <property type="protein sequence ID" value="CAH89580.1"/>
    <property type="molecule type" value="mRNA"/>
</dbReference>
<dbReference type="RefSeq" id="NP_001124696.1">
    <property type="nucleotide sequence ID" value="NM_001131224.1"/>
</dbReference>
<dbReference type="SMR" id="Q5RF77"/>
<dbReference type="STRING" id="9601.ENSPPYP00000005869"/>
<dbReference type="GeneID" id="100171543"/>
<dbReference type="KEGG" id="pon:100171543"/>
<dbReference type="CTD" id="55743"/>
<dbReference type="eggNOG" id="KOG0802">
    <property type="taxonomic scope" value="Eukaryota"/>
</dbReference>
<dbReference type="InParanoid" id="Q5RF77"/>
<dbReference type="OrthoDB" id="1305878at2759"/>
<dbReference type="UniPathway" id="UPA00143"/>
<dbReference type="Proteomes" id="UP000001595">
    <property type="component" value="Unplaced"/>
</dbReference>
<dbReference type="GO" id="GO:0005634">
    <property type="term" value="C:nucleus"/>
    <property type="evidence" value="ECO:0000250"/>
    <property type="project" value="UniProtKB"/>
</dbReference>
<dbReference type="GO" id="GO:0016605">
    <property type="term" value="C:PML body"/>
    <property type="evidence" value="ECO:0000250"/>
    <property type="project" value="UniProtKB"/>
</dbReference>
<dbReference type="GO" id="GO:0000166">
    <property type="term" value="F:nucleotide binding"/>
    <property type="evidence" value="ECO:0000250"/>
    <property type="project" value="UniProtKB"/>
</dbReference>
<dbReference type="GO" id="GO:0004842">
    <property type="term" value="F:ubiquitin-protein transferase activity"/>
    <property type="evidence" value="ECO:0000250"/>
    <property type="project" value="UniProtKB"/>
</dbReference>
<dbReference type="GO" id="GO:0008270">
    <property type="term" value="F:zinc ion binding"/>
    <property type="evidence" value="ECO:0007669"/>
    <property type="project" value="UniProtKB-KW"/>
</dbReference>
<dbReference type="GO" id="GO:0051301">
    <property type="term" value="P:cell division"/>
    <property type="evidence" value="ECO:0007669"/>
    <property type="project" value="UniProtKB-KW"/>
</dbReference>
<dbReference type="GO" id="GO:0044818">
    <property type="term" value="P:mitotic G2/M transition checkpoint"/>
    <property type="evidence" value="ECO:0000250"/>
    <property type="project" value="UniProtKB"/>
</dbReference>
<dbReference type="GO" id="GO:0016567">
    <property type="term" value="P:protein ubiquitination"/>
    <property type="evidence" value="ECO:0007669"/>
    <property type="project" value="UniProtKB-UniPathway"/>
</dbReference>
<dbReference type="GO" id="GO:0006511">
    <property type="term" value="P:ubiquitin-dependent protein catabolic process"/>
    <property type="evidence" value="ECO:0000250"/>
    <property type="project" value="UniProtKB"/>
</dbReference>
<dbReference type="CDD" id="cd22672">
    <property type="entry name" value="FHA_CHFR"/>
    <property type="match status" value="1"/>
</dbReference>
<dbReference type="CDD" id="cd16503">
    <property type="entry name" value="RING-HC_CHFR"/>
    <property type="match status" value="1"/>
</dbReference>
<dbReference type="FunFam" id="3.30.40.10:FF:000203">
    <property type="entry name" value="E3 ubiquitin-protein ligase CHFR isoform X1"/>
    <property type="match status" value="1"/>
</dbReference>
<dbReference type="FunFam" id="3.30.40.140:FF:000001">
    <property type="entry name" value="E3 ubiquitin-protein ligase CHFR isoform X1"/>
    <property type="match status" value="1"/>
</dbReference>
<dbReference type="FunFam" id="2.60.200.20:FF:000022">
    <property type="entry name" value="E3 ubiquitin-protein ligase CHFR isoform X2"/>
    <property type="match status" value="1"/>
</dbReference>
<dbReference type="Gene3D" id="2.60.200.20">
    <property type="match status" value="1"/>
</dbReference>
<dbReference type="Gene3D" id="3.30.40.140">
    <property type="match status" value="1"/>
</dbReference>
<dbReference type="Gene3D" id="3.30.40.10">
    <property type="entry name" value="Zinc/RING finger domain, C3HC4 (zinc finger)"/>
    <property type="match status" value="1"/>
</dbReference>
<dbReference type="InterPro" id="IPR040909">
    <property type="entry name" value="CHFR_Znf-CRD"/>
</dbReference>
<dbReference type="InterPro" id="IPR052256">
    <property type="entry name" value="E3_ubiquitin-ligase_CHFR"/>
</dbReference>
<dbReference type="InterPro" id="IPR000253">
    <property type="entry name" value="FHA_dom"/>
</dbReference>
<dbReference type="InterPro" id="IPR008984">
    <property type="entry name" value="SMAD_FHA_dom_sf"/>
</dbReference>
<dbReference type="InterPro" id="IPR001841">
    <property type="entry name" value="Znf_RING"/>
</dbReference>
<dbReference type="InterPro" id="IPR013083">
    <property type="entry name" value="Znf_RING/FYVE/PHD"/>
</dbReference>
<dbReference type="InterPro" id="IPR017907">
    <property type="entry name" value="Znf_RING_CS"/>
</dbReference>
<dbReference type="PANTHER" id="PTHR16079:SF4">
    <property type="entry name" value="E3 UBIQUITIN-PROTEIN LIGASE CHFR"/>
    <property type="match status" value="1"/>
</dbReference>
<dbReference type="PANTHER" id="PTHR16079">
    <property type="entry name" value="UBIQUITIN LIGASE PROTEIN CHFR"/>
    <property type="match status" value="1"/>
</dbReference>
<dbReference type="Pfam" id="PF00498">
    <property type="entry name" value="FHA"/>
    <property type="match status" value="1"/>
</dbReference>
<dbReference type="Pfam" id="PF13923">
    <property type="entry name" value="zf-C3HC4_2"/>
    <property type="match status" value="1"/>
</dbReference>
<dbReference type="Pfam" id="PF17979">
    <property type="entry name" value="zf-CRD"/>
    <property type="match status" value="1"/>
</dbReference>
<dbReference type="SMART" id="SM00240">
    <property type="entry name" value="FHA"/>
    <property type="match status" value="1"/>
</dbReference>
<dbReference type="SMART" id="SM00184">
    <property type="entry name" value="RING"/>
    <property type="match status" value="2"/>
</dbReference>
<dbReference type="SUPFAM" id="SSF57850">
    <property type="entry name" value="RING/U-box"/>
    <property type="match status" value="1"/>
</dbReference>
<dbReference type="SUPFAM" id="SSF49879">
    <property type="entry name" value="SMAD/FHA domain"/>
    <property type="match status" value="1"/>
</dbReference>
<dbReference type="PROSITE" id="PS50006">
    <property type="entry name" value="FHA_DOMAIN"/>
    <property type="match status" value="1"/>
</dbReference>
<dbReference type="PROSITE" id="PS00518">
    <property type="entry name" value="ZF_RING_1"/>
    <property type="match status" value="1"/>
</dbReference>
<dbReference type="PROSITE" id="PS50089">
    <property type="entry name" value="ZF_RING_2"/>
    <property type="match status" value="1"/>
</dbReference>
<comment type="function">
    <text evidence="2">E3 ubiquitin-protein ligase that functions in the antephase checkpoint by actively delaying passage into mitosis in response to microtubule poisons. Acts in early prophase before chromosome condensation, when the centrosome move apart from each other along the periphery of the nucleus. Probably involved in signaling the presence of mitotic stress caused by microtubule poisons by mediating the 'Lys-48'-linked ubiquitination of target proteins, leading to their degradation by the proteasome. Promotes the ubiquitination and subsequent degradation of AURKA and PLK1. Probably acts as a tumor suppressor, possibly by mediating the polyubiquitination of HDAC1, leading to its degradation. May also promote the formation of 'Lys-63'-linked polyubiquitin chains and functions with the specific ubiquitin-conjugating UBC13-MMS2 (UBE2N-UBE2V2) heterodimer. Substrates that are polyubiquitinated at 'Lys-63' are usually not targeted for degradation, but are rather involved in signaling cellular stress.</text>
</comment>
<comment type="catalytic activity">
    <reaction evidence="2">
        <text>S-ubiquitinyl-[E2 ubiquitin-conjugating enzyme]-L-cysteine + [acceptor protein]-L-lysine = [E2 ubiquitin-conjugating enzyme]-L-cysteine + N(6)-ubiquitinyl-[acceptor protein]-L-lysine.</text>
        <dbReference type="EC" id="2.3.2.27"/>
    </reaction>
</comment>
<comment type="pathway">
    <text>Protein modification; protein ubiquitination.</text>
</comment>
<comment type="subunit">
    <text evidence="2">Interacts with HDAC1 and HDAC2. Interacts with PML (with sumoylated form of PML).</text>
</comment>
<comment type="subcellular location">
    <subcellularLocation>
        <location evidence="2">Nucleus</location>
        <location evidence="2">PML body</location>
    </subcellularLocation>
</comment>
<comment type="domain">
    <text evidence="2">The PBZ-type zinc finger (also named CYR) mediates non-covalent poly(ADP-ribose)-binding. Poly(ADP-ribose)-binding is dependent on the presence of zinc and is required for its function in antephase checkpoint.</text>
</comment>
<comment type="domain">
    <text evidence="2">The FHA domain plays a key role in the anti-proliferative properties of the protein and is involved in initiating a cell cycle arrest at G2/M. The FHA domain may be required to interact with phosphorylated proteins.</text>
</comment>
<comment type="PTM">
    <text evidence="2">Poly-ADP-ribosylated. In addition to binding non covalently poly(ADP-ribose) via its PBZ-type zinc finger, the protein is also covalently poly-ADP-ribosylated by PARP1.</text>
</comment>
<comment type="PTM">
    <text evidence="2">Autoubiquitinated; may regulate its cellular level.</text>
</comment>
<comment type="PTM">
    <text evidence="2">Phosphorylated by PKB. Phosphorylation may affect its E3 ligase activity.</text>
</comment>
<comment type="similarity">
    <text evidence="6">Belongs to the CHFR family.</text>
</comment>
<name>CHFR_PONAB</name>
<gene>
    <name type="primary">CHFR</name>
</gene>
<evidence type="ECO:0000250" key="1">
    <source>
        <dbReference type="UniProtKB" id="Q810L3"/>
    </source>
</evidence>
<evidence type="ECO:0000250" key="2">
    <source>
        <dbReference type="UniProtKB" id="Q96EP1"/>
    </source>
</evidence>
<evidence type="ECO:0000255" key="3">
    <source>
        <dbReference type="PROSITE-ProRule" id="PRU00086"/>
    </source>
</evidence>
<evidence type="ECO:0000255" key="4">
    <source>
        <dbReference type="PROSITE-ProRule" id="PRU00175"/>
    </source>
</evidence>
<evidence type="ECO:0000256" key="5">
    <source>
        <dbReference type="SAM" id="MobiDB-lite"/>
    </source>
</evidence>
<evidence type="ECO:0000305" key="6"/>
<keyword id="KW-0013">ADP-ribosylation</keyword>
<keyword id="KW-0131">Cell cycle</keyword>
<keyword id="KW-0132">Cell division</keyword>
<keyword id="KW-0479">Metal-binding</keyword>
<keyword id="KW-0498">Mitosis</keyword>
<keyword id="KW-0539">Nucleus</keyword>
<keyword id="KW-0597">Phosphoprotein</keyword>
<keyword id="KW-1185">Reference proteome</keyword>
<keyword id="KW-0808">Transferase</keyword>
<keyword id="KW-0832">Ubl conjugation</keyword>
<keyword id="KW-0833">Ubl conjugation pathway</keyword>
<keyword id="KW-0862">Zinc</keyword>
<keyword id="KW-0863">Zinc-finger</keyword>
<protein>
    <recommendedName>
        <fullName>E3 ubiquitin-protein ligase CHFR</fullName>
        <ecNumber evidence="2">2.3.2.27</ecNumber>
    </recommendedName>
    <alternativeName>
        <fullName>Checkpoint with forkhead and RING finger domains protein</fullName>
    </alternativeName>
    <alternativeName>
        <fullName evidence="6">RING-type E3 ubiquitin transferase CHFR</fullName>
    </alternativeName>
</protein>
<reference key="1">
    <citation type="submission" date="2004-11" db="EMBL/GenBank/DDBJ databases">
        <authorList>
            <consortium name="The German cDNA consortium"/>
        </authorList>
    </citation>
    <scope>NUCLEOTIDE SEQUENCE [LARGE SCALE MRNA]</scope>
    <source>
        <tissue>Kidney</tissue>
    </source>
</reference>
<feature type="chain" id="PRO_0000385301" description="E3 ubiquitin-protein ligase CHFR">
    <location>
        <begin position="1"/>
        <end position="571"/>
    </location>
</feature>
<feature type="domain" description="FHA" evidence="3">
    <location>
        <begin position="38"/>
        <end position="89"/>
    </location>
</feature>
<feature type="zinc finger region" description="RING-type" evidence="4">
    <location>
        <begin position="212"/>
        <end position="251"/>
    </location>
</feature>
<feature type="zinc finger region" description="PBZ-type">
    <location>
        <begin position="540"/>
        <end position="562"/>
    </location>
</feature>
<feature type="region of interest" description="Disordered" evidence="5">
    <location>
        <begin position="1"/>
        <end position="21"/>
    </location>
</feature>
<feature type="region of interest" description="Disordered" evidence="5">
    <location>
        <begin position="113"/>
        <end position="138"/>
    </location>
</feature>
<feature type="region of interest" description="Disordered" evidence="5">
    <location>
        <begin position="297"/>
        <end position="325"/>
    </location>
</feature>
<feature type="compositionally biased region" description="Acidic residues" evidence="5">
    <location>
        <begin position="308"/>
        <end position="325"/>
    </location>
</feature>
<feature type="modified residue" description="Phosphoserine" evidence="2">
    <location>
        <position position="152"/>
    </location>
</feature>
<feature type="modified residue" description="Phosphothreonine" evidence="1">
    <location>
        <position position="294"/>
    </location>
</feature>
<accession>Q5RF77</accession>